<evidence type="ECO:0000250" key="1">
    <source>
        <dbReference type="UniProtKB" id="Q9SN38"/>
    </source>
</evidence>
<evidence type="ECO:0000255" key="2"/>
<evidence type="ECO:0000255" key="3">
    <source>
        <dbReference type="PROSITE-ProRule" id="PRU00498"/>
    </source>
</evidence>
<evidence type="ECO:0000256" key="4">
    <source>
        <dbReference type="SAM" id="MobiDB-lite"/>
    </source>
</evidence>
<evidence type="ECO:0000269" key="5">
    <source>
    </source>
</evidence>
<evidence type="ECO:0000303" key="6">
    <source>
    </source>
</evidence>
<evidence type="ECO:0000303" key="7">
    <source>
    </source>
</evidence>
<evidence type="ECO:0000305" key="8"/>
<evidence type="ECO:0000312" key="9">
    <source>
        <dbReference type="Araport" id="AT5G45770"/>
    </source>
</evidence>
<evidence type="ECO:0000312" key="10">
    <source>
        <dbReference type="EMBL" id="BAB09219.1"/>
    </source>
</evidence>
<reference key="1">
    <citation type="journal article" date="1998" name="DNA Res.">
        <title>Structural analysis of Arabidopsis thaliana chromosome 5. VI. Sequence features of the regions of 1,367,185 bp covered by 19 physically assigned P1 and TAC clones.</title>
        <authorList>
            <person name="Kotani H."/>
            <person name="Nakamura Y."/>
            <person name="Sato S."/>
            <person name="Asamizu E."/>
            <person name="Kaneko T."/>
            <person name="Miyajima N."/>
            <person name="Tabata S."/>
        </authorList>
    </citation>
    <scope>NUCLEOTIDE SEQUENCE [LARGE SCALE GENOMIC DNA]</scope>
    <source>
        <strain>cv. Columbia</strain>
    </source>
</reference>
<reference key="2">
    <citation type="journal article" date="2017" name="Plant J.">
        <title>Araport11: a complete reannotation of the Arabidopsis thaliana reference genome.</title>
        <authorList>
            <person name="Cheng C.Y."/>
            <person name="Krishnakumar V."/>
            <person name="Chan A.P."/>
            <person name="Thibaud-Nissen F."/>
            <person name="Schobel S."/>
            <person name="Town C.D."/>
        </authorList>
    </citation>
    <scope>GENOME REANNOTATION</scope>
    <source>
        <strain>cv. Columbia</strain>
    </source>
</reference>
<reference key="3">
    <citation type="journal article" date="2005" name="Plant Physiol.">
        <title>Phylogenomic analysis of the receptor-like proteins of rice and Arabidopsis.</title>
        <authorList>
            <person name="Fritz-Laylin L.K."/>
            <person name="Krishnamurthy N."/>
            <person name="Toer M."/>
            <person name="Sjoelander K.V."/>
            <person name="Jones J.D."/>
        </authorList>
    </citation>
    <scope>GENE FAMILY</scope>
    <source>
        <strain>cv. Columbia</strain>
    </source>
</reference>
<reference key="4">
    <citation type="journal article" date="2008" name="Plant Physiol.">
        <title>A genome-wide functional investigation into the roles of receptor-like proteins in Arabidopsis.</title>
        <authorList>
            <person name="Wang G."/>
            <person name="Ellendorff U."/>
            <person name="Kemp B."/>
            <person name="Mansfield J.W."/>
            <person name="Forsyth A."/>
            <person name="Mitchell K."/>
            <person name="Bastas K."/>
            <person name="Liu C.-M."/>
            <person name="Woods-Toer A."/>
            <person name="Zipfel C."/>
            <person name="de Wit P.J.G.M."/>
            <person name="Jones J.D.G."/>
            <person name="Toer M."/>
            <person name="Thomma B.P.H.J."/>
        </authorList>
    </citation>
    <scope>GENE FAMILY</scope>
    <scope>NOMENCLATURE</scope>
</reference>
<reference key="5">
    <citation type="journal article" date="2010" name="Plant Cell">
        <title>Arabidopsis snc2-1D activates receptor-like protein-mediated immunity transduced through WRKY70.</title>
        <authorList>
            <person name="Zhang Y."/>
            <person name="Yang Y."/>
            <person name="Fang B."/>
            <person name="Gannon P."/>
            <person name="Ding P."/>
            <person name="Li X."/>
            <person name="Zhang Y."/>
        </authorList>
    </citation>
    <scope>FUNCTION</scope>
    <scope>MUTAGENESIS OF GLY-404</scope>
    <source>
        <strain>cv. Columbia</strain>
    </source>
</reference>
<keyword id="KW-1003">Cell membrane</keyword>
<keyword id="KW-0325">Glycoprotein</keyword>
<keyword id="KW-0433">Leucine-rich repeat</keyword>
<keyword id="KW-0472">Membrane</keyword>
<keyword id="KW-0611">Plant defense</keyword>
<keyword id="KW-0675">Receptor</keyword>
<keyword id="KW-1185">Reference proteome</keyword>
<keyword id="KW-0677">Repeat</keyword>
<keyword id="KW-0732">Signal</keyword>
<keyword id="KW-0812">Transmembrane</keyword>
<keyword id="KW-1133">Transmembrane helix</keyword>
<organism>
    <name type="scientific">Arabidopsis thaliana</name>
    <name type="common">Mouse-ear cress</name>
    <dbReference type="NCBI Taxonomy" id="3702"/>
    <lineage>
        <taxon>Eukaryota</taxon>
        <taxon>Viridiplantae</taxon>
        <taxon>Streptophyta</taxon>
        <taxon>Embryophyta</taxon>
        <taxon>Tracheophyta</taxon>
        <taxon>Spermatophyta</taxon>
        <taxon>Magnoliopsida</taxon>
        <taxon>eudicotyledons</taxon>
        <taxon>Gunneridae</taxon>
        <taxon>Pentapetalae</taxon>
        <taxon>rosids</taxon>
        <taxon>malvids</taxon>
        <taxon>Brassicales</taxon>
        <taxon>Brassicaceae</taxon>
        <taxon>Camelineae</taxon>
        <taxon>Arabidopsis</taxon>
    </lineage>
</organism>
<gene>
    <name evidence="6" type="primary">RLP55</name>
    <name evidence="7" type="synonym">SNC3</name>
    <name evidence="9" type="ordered locus">At5g45770</name>
    <name evidence="10" type="ORF">MRA19.20</name>
</gene>
<accession>Q9FK66</accession>
<protein>
    <recommendedName>
        <fullName evidence="6">Receptor-like protein 55</fullName>
        <shortName evidence="6">AtRLP55</shortName>
    </recommendedName>
    <alternativeName>
        <fullName evidence="7">Protein SUPPRESSOR OF NPR1-1, CONSTITUTIVE 3</fullName>
    </alternativeName>
</protein>
<comment type="function">
    <text evidence="5">Involved in plant defense.</text>
</comment>
<comment type="subcellular location">
    <subcellularLocation>
        <location evidence="1">Cell membrane</location>
        <topology evidence="2">Single-pass type I membrane protein</topology>
    </subcellularLocation>
</comment>
<comment type="similarity">
    <text evidence="8">Belongs to the RLP family.</text>
</comment>
<dbReference type="EMBL" id="AB012245">
    <property type="protein sequence ID" value="BAB09219.1"/>
    <property type="molecule type" value="Genomic_DNA"/>
</dbReference>
<dbReference type="EMBL" id="CP002688">
    <property type="protein sequence ID" value="AED95295.1"/>
    <property type="molecule type" value="Genomic_DNA"/>
</dbReference>
<dbReference type="RefSeq" id="NP_199389.1">
    <property type="nucleotide sequence ID" value="NM_123944.3"/>
</dbReference>
<dbReference type="SMR" id="Q9FK66"/>
<dbReference type="FunCoup" id="Q9FK66">
    <property type="interactions" value="34"/>
</dbReference>
<dbReference type="IntAct" id="Q9FK66">
    <property type="interactions" value="7"/>
</dbReference>
<dbReference type="STRING" id="3702.Q9FK66"/>
<dbReference type="GlyCosmos" id="Q9FK66">
    <property type="glycosylation" value="12 sites, No reported glycans"/>
</dbReference>
<dbReference type="GlyGen" id="Q9FK66">
    <property type="glycosylation" value="12 sites"/>
</dbReference>
<dbReference type="iPTMnet" id="Q9FK66"/>
<dbReference type="PaxDb" id="3702-AT5G45770.1"/>
<dbReference type="ProteomicsDB" id="226917"/>
<dbReference type="EnsemblPlants" id="AT5G45770.1">
    <property type="protein sequence ID" value="AT5G45770.1"/>
    <property type="gene ID" value="AT5G45770"/>
</dbReference>
<dbReference type="GeneID" id="834616"/>
<dbReference type="Gramene" id="AT5G45770.1">
    <property type="protein sequence ID" value="AT5G45770.1"/>
    <property type="gene ID" value="AT5G45770"/>
</dbReference>
<dbReference type="KEGG" id="ath:AT5G45770"/>
<dbReference type="Araport" id="AT5G45770"/>
<dbReference type="TAIR" id="AT5G45770">
    <property type="gene designation" value="RLP55"/>
</dbReference>
<dbReference type="eggNOG" id="KOG0619">
    <property type="taxonomic scope" value="Eukaryota"/>
</dbReference>
<dbReference type="HOGENOM" id="CLU_034697_0_0_1"/>
<dbReference type="InParanoid" id="Q9FK66"/>
<dbReference type="OMA" id="PYRHITS"/>
<dbReference type="PhylomeDB" id="Q9FK66"/>
<dbReference type="PRO" id="PR:Q9FK66"/>
<dbReference type="Proteomes" id="UP000006548">
    <property type="component" value="Chromosome 5"/>
</dbReference>
<dbReference type="ExpressionAtlas" id="Q9FK66">
    <property type="expression patterns" value="baseline and differential"/>
</dbReference>
<dbReference type="GO" id="GO:0005886">
    <property type="term" value="C:plasma membrane"/>
    <property type="evidence" value="ECO:0000250"/>
    <property type="project" value="UniProtKB"/>
</dbReference>
<dbReference type="GO" id="GO:0006952">
    <property type="term" value="P:defense response"/>
    <property type="evidence" value="ECO:0007669"/>
    <property type="project" value="UniProtKB-KW"/>
</dbReference>
<dbReference type="GO" id="GO:0031347">
    <property type="term" value="P:regulation of defense response"/>
    <property type="evidence" value="ECO:0000315"/>
    <property type="project" value="UniProtKB"/>
</dbReference>
<dbReference type="FunFam" id="3.80.10.10:FF:002132">
    <property type="entry name" value="Receptor-like protein 55"/>
    <property type="match status" value="1"/>
</dbReference>
<dbReference type="Gene3D" id="3.80.10.10">
    <property type="entry name" value="Ribonuclease Inhibitor"/>
    <property type="match status" value="1"/>
</dbReference>
<dbReference type="InterPro" id="IPR001611">
    <property type="entry name" value="Leu-rich_rpt"/>
</dbReference>
<dbReference type="InterPro" id="IPR032675">
    <property type="entry name" value="LRR_dom_sf"/>
</dbReference>
<dbReference type="InterPro" id="IPR053038">
    <property type="entry name" value="RLP_Defense"/>
</dbReference>
<dbReference type="PANTHER" id="PTHR48064">
    <property type="entry name" value="OS01G0750400 PROTEIN"/>
    <property type="match status" value="1"/>
</dbReference>
<dbReference type="PANTHER" id="PTHR48064:SF1">
    <property type="entry name" value="RECEPTOR-LIKE PROTEIN 51-RELATED"/>
    <property type="match status" value="1"/>
</dbReference>
<dbReference type="Pfam" id="PF00560">
    <property type="entry name" value="LRR_1"/>
    <property type="match status" value="3"/>
</dbReference>
<dbReference type="Pfam" id="PF13855">
    <property type="entry name" value="LRR_8"/>
    <property type="match status" value="1"/>
</dbReference>
<dbReference type="PRINTS" id="PR00019">
    <property type="entry name" value="LEURICHRPT"/>
</dbReference>
<dbReference type="SUPFAM" id="SSF52058">
    <property type="entry name" value="L domain-like"/>
    <property type="match status" value="1"/>
</dbReference>
<dbReference type="PROSITE" id="PS51450">
    <property type="entry name" value="LRR"/>
    <property type="match status" value="6"/>
</dbReference>
<feature type="signal peptide" evidence="2">
    <location>
        <begin position="1"/>
        <end position="25"/>
    </location>
</feature>
<feature type="chain" id="PRO_5006751748" description="Receptor-like protein 55" evidence="2">
    <location>
        <begin position="26"/>
        <end position="425"/>
    </location>
</feature>
<feature type="topological domain" description="Extracellular" evidence="2">
    <location>
        <begin position="26"/>
        <end position="397"/>
    </location>
</feature>
<feature type="transmembrane region" description="Helical" evidence="2">
    <location>
        <begin position="398"/>
        <end position="418"/>
    </location>
</feature>
<feature type="topological domain" description="Cytoplasmic" evidence="2">
    <location>
        <begin position="419"/>
        <end position="425"/>
    </location>
</feature>
<feature type="repeat" description="LRR 1" evidence="2">
    <location>
        <begin position="144"/>
        <end position="169"/>
    </location>
</feature>
<feature type="repeat" description="LRR 2" evidence="2">
    <location>
        <begin position="170"/>
        <end position="193"/>
    </location>
</feature>
<feature type="repeat" description="LRR 3" evidence="2">
    <location>
        <begin position="195"/>
        <end position="216"/>
    </location>
</feature>
<feature type="repeat" description="LRR 4" evidence="2">
    <location>
        <begin position="217"/>
        <end position="240"/>
    </location>
</feature>
<feature type="repeat" description="LRR 5" evidence="2">
    <location>
        <begin position="242"/>
        <end position="264"/>
    </location>
</feature>
<feature type="repeat" description="LRR 6" evidence="2">
    <location>
        <begin position="265"/>
        <end position="287"/>
    </location>
</feature>
<feature type="repeat" description="LRR 7" evidence="2">
    <location>
        <begin position="288"/>
        <end position="313"/>
    </location>
</feature>
<feature type="region of interest" description="Disordered" evidence="4">
    <location>
        <begin position="355"/>
        <end position="389"/>
    </location>
</feature>
<feature type="compositionally biased region" description="Basic and acidic residues" evidence="4">
    <location>
        <begin position="374"/>
        <end position="389"/>
    </location>
</feature>
<feature type="glycosylation site" description="N-linked (GlcNAc...) asparagine" evidence="3">
    <location>
        <position position="40"/>
    </location>
</feature>
<feature type="glycosylation site" description="N-linked (GlcNAc...) asparagine" evidence="3">
    <location>
        <position position="54"/>
    </location>
</feature>
<feature type="glycosylation site" description="N-linked (GlcNAc...) asparagine" evidence="3">
    <location>
        <position position="79"/>
    </location>
</feature>
<feature type="glycosylation site" description="N-linked (GlcNAc...) asparagine" evidence="3">
    <location>
        <position position="132"/>
    </location>
</feature>
<feature type="glycosylation site" description="N-linked (GlcNAc...) asparagine" evidence="3">
    <location>
        <position position="182"/>
    </location>
</feature>
<feature type="glycosylation site" description="N-linked (GlcNAc...) asparagine" evidence="3">
    <location>
        <position position="202"/>
    </location>
</feature>
<feature type="glycosylation site" description="N-linked (GlcNAc...) asparagine" evidence="3">
    <location>
        <position position="223"/>
    </location>
</feature>
<feature type="glycosylation site" description="N-linked (GlcNAc...) asparagine" evidence="3">
    <location>
        <position position="245"/>
    </location>
</feature>
<feature type="glycosylation site" description="N-linked (GlcNAc...) asparagine" evidence="3">
    <location>
        <position position="278"/>
    </location>
</feature>
<feature type="glycosylation site" description="N-linked (GlcNAc...) asparagine" evidence="3">
    <location>
        <position position="308"/>
    </location>
</feature>
<feature type="glycosylation site" description="N-linked (GlcNAc...) asparagine" evidence="3">
    <location>
        <position position="329"/>
    </location>
</feature>
<feature type="glycosylation site" description="N-linked (GlcNAc...) asparagine" evidence="3">
    <location>
        <position position="395"/>
    </location>
</feature>
<feature type="mutagenesis site" description="Constitutive activation of defense responses leading to enhanced resistance against Hyaloperonospora arabidopsidis NOCO2. Dwarf morphology." evidence="5">
    <original>G</original>
    <variation>R</variation>
    <location>
        <position position="404"/>
    </location>
</feature>
<name>RLP55_ARATH</name>
<sequence length="425" mass="47174">MKPQQPQPPLLLLLLLPLLLTTVSSYPLNPKQLKALQSLNISTPTNDPCNNNNNQSSSSSITCDDASPYRHITSISFTNCSSTLSLPSKTLKPLSKSLISLSFTNCPSLSPPYHLPISLHSFSAVSSFLQNNRTKLSGLFLARLKNLKTLYISSTPIQTSRRLYVILGNMHKLTSLTISNSNLTGLIPKSFHSNLRYIDLSNNSLKGSIRISITRLKNLKSLNLSHNSLSGQIPNKIKSLTFLKNLSLASNKLSGTIPNSLSSISELTHLDLSMNQLNGTVPSFFSEMKNLKHLNLADNSFHGVLPFNESFIKNLNFFEIGRNSELCYNKTVLSSNLKLEGLAPCDKYGFPLWSPSQKEESLSGENDYDVEGGNEEKTENLKTKEEEEEEHKGSNKTLFGLGIGLFSLVFLILFLFYLAKRCRLI</sequence>
<proteinExistence type="evidence at protein level"/>